<evidence type="ECO:0000255" key="1">
    <source>
        <dbReference type="HAMAP-Rule" id="MF_00215"/>
    </source>
</evidence>
<dbReference type="EC" id="2.7.1.33" evidence="1"/>
<dbReference type="EMBL" id="AM849034">
    <property type="protein sequence ID" value="CAQ00636.1"/>
    <property type="molecule type" value="Genomic_DNA"/>
</dbReference>
<dbReference type="RefSeq" id="WP_012297961.1">
    <property type="nucleotide sequence ID" value="NZ_MZMN01000003.1"/>
</dbReference>
<dbReference type="SMR" id="B0RD37"/>
<dbReference type="STRING" id="31964.CMS0517"/>
<dbReference type="KEGG" id="cms:CMS0517"/>
<dbReference type="eggNOG" id="COG1072">
    <property type="taxonomic scope" value="Bacteria"/>
</dbReference>
<dbReference type="HOGENOM" id="CLU_053818_1_1_11"/>
<dbReference type="OrthoDB" id="1550976at2"/>
<dbReference type="UniPathway" id="UPA00241">
    <property type="reaction ID" value="UER00352"/>
</dbReference>
<dbReference type="Proteomes" id="UP000001318">
    <property type="component" value="Chromosome"/>
</dbReference>
<dbReference type="GO" id="GO:0005737">
    <property type="term" value="C:cytoplasm"/>
    <property type="evidence" value="ECO:0007669"/>
    <property type="project" value="UniProtKB-SubCell"/>
</dbReference>
<dbReference type="GO" id="GO:0005524">
    <property type="term" value="F:ATP binding"/>
    <property type="evidence" value="ECO:0007669"/>
    <property type="project" value="UniProtKB-UniRule"/>
</dbReference>
<dbReference type="GO" id="GO:0004594">
    <property type="term" value="F:pantothenate kinase activity"/>
    <property type="evidence" value="ECO:0007669"/>
    <property type="project" value="UniProtKB-UniRule"/>
</dbReference>
<dbReference type="GO" id="GO:0015937">
    <property type="term" value="P:coenzyme A biosynthetic process"/>
    <property type="evidence" value="ECO:0007669"/>
    <property type="project" value="UniProtKB-UniRule"/>
</dbReference>
<dbReference type="CDD" id="cd02025">
    <property type="entry name" value="PanK"/>
    <property type="match status" value="1"/>
</dbReference>
<dbReference type="Gene3D" id="3.40.50.300">
    <property type="entry name" value="P-loop containing nucleotide triphosphate hydrolases"/>
    <property type="match status" value="1"/>
</dbReference>
<dbReference type="HAMAP" id="MF_00215">
    <property type="entry name" value="Pantothen_kinase_1"/>
    <property type="match status" value="1"/>
</dbReference>
<dbReference type="InterPro" id="IPR027417">
    <property type="entry name" value="P-loop_NTPase"/>
</dbReference>
<dbReference type="InterPro" id="IPR004566">
    <property type="entry name" value="PanK"/>
</dbReference>
<dbReference type="InterPro" id="IPR006083">
    <property type="entry name" value="PRK/URK"/>
</dbReference>
<dbReference type="NCBIfam" id="TIGR00554">
    <property type="entry name" value="panK_bact"/>
    <property type="match status" value="1"/>
</dbReference>
<dbReference type="PANTHER" id="PTHR10285">
    <property type="entry name" value="URIDINE KINASE"/>
    <property type="match status" value="1"/>
</dbReference>
<dbReference type="Pfam" id="PF00485">
    <property type="entry name" value="PRK"/>
    <property type="match status" value="1"/>
</dbReference>
<dbReference type="PIRSF" id="PIRSF000545">
    <property type="entry name" value="Pantothenate_kin"/>
    <property type="match status" value="1"/>
</dbReference>
<dbReference type="SUPFAM" id="SSF52540">
    <property type="entry name" value="P-loop containing nucleoside triphosphate hydrolases"/>
    <property type="match status" value="1"/>
</dbReference>
<comment type="catalytic activity">
    <reaction evidence="1">
        <text>(R)-pantothenate + ATP = (R)-4'-phosphopantothenate + ADP + H(+)</text>
        <dbReference type="Rhea" id="RHEA:16373"/>
        <dbReference type="ChEBI" id="CHEBI:10986"/>
        <dbReference type="ChEBI" id="CHEBI:15378"/>
        <dbReference type="ChEBI" id="CHEBI:29032"/>
        <dbReference type="ChEBI" id="CHEBI:30616"/>
        <dbReference type="ChEBI" id="CHEBI:456216"/>
        <dbReference type="EC" id="2.7.1.33"/>
    </reaction>
</comment>
<comment type="pathway">
    <text evidence="1">Cofactor biosynthesis; coenzyme A biosynthesis; CoA from (R)-pantothenate: step 1/5.</text>
</comment>
<comment type="subcellular location">
    <subcellularLocation>
        <location evidence="1">Cytoplasm</location>
    </subcellularLocation>
</comment>
<comment type="similarity">
    <text evidence="1">Belongs to the prokaryotic pantothenate kinase family.</text>
</comment>
<reference key="1">
    <citation type="journal article" date="2008" name="J. Bacteriol.">
        <title>Genome of the actinomycete plant pathogen Clavibacter michiganensis subsp. sepedonicus suggests recent niche adaptation.</title>
        <authorList>
            <person name="Bentley S.D."/>
            <person name="Corton C."/>
            <person name="Brown S.E."/>
            <person name="Barron A."/>
            <person name="Clark L."/>
            <person name="Doggett J."/>
            <person name="Harris B."/>
            <person name="Ormond D."/>
            <person name="Quail M.A."/>
            <person name="May G."/>
            <person name="Francis D."/>
            <person name="Knudson D."/>
            <person name="Parkhill J."/>
            <person name="Ishimaru C.A."/>
        </authorList>
    </citation>
    <scope>NUCLEOTIDE SEQUENCE [LARGE SCALE GENOMIC DNA]</scope>
    <source>
        <strain>ATCC 33113 / DSM 20744 / JCM 9667 / LMG 2889 / ICMP 2535 / C-1</strain>
    </source>
</reference>
<sequence length="319" mass="35632">MADTATGSPTSHGHVSPFVEIARADWAALAPATHLPLRETELVQLRGIGDRLDMREVEDVYLPLSRLLNLYVTGTKKLHRDTSAFLGERAKSTPFIIGVAGSVAVGKSTVARLLREMLARWDDTPRVELVTTDGFLHPNAELERRGLMERKGFPESYDRRALLRFVTQVKSGVPEVRAPFYSHLAYDIVPGAEVVVRQPDVLIIEGLNVLQPAASGAKLAVSDLFDFSIYVDARTHDIAQWYEERFLSLQRGAFSNPRSYFHRYAELSPAEAVARARGIWSAINEPNLEQNIRPTRSRATLVLRKDADHSVANVLLRKL</sequence>
<proteinExistence type="inferred from homology"/>
<gene>
    <name evidence="1" type="primary">coaA</name>
    <name type="ordered locus">CMS0517</name>
</gene>
<protein>
    <recommendedName>
        <fullName evidence="1">Pantothenate kinase</fullName>
        <ecNumber evidence="1">2.7.1.33</ecNumber>
    </recommendedName>
    <alternativeName>
        <fullName evidence="1">Pantothenic acid kinase</fullName>
    </alternativeName>
</protein>
<feature type="chain" id="PRO_1000078054" description="Pantothenate kinase">
    <location>
        <begin position="1"/>
        <end position="319"/>
    </location>
</feature>
<feature type="binding site" evidence="1">
    <location>
        <begin position="101"/>
        <end position="108"/>
    </location>
    <ligand>
        <name>ATP</name>
        <dbReference type="ChEBI" id="CHEBI:30616"/>
    </ligand>
</feature>
<organism>
    <name type="scientific">Clavibacter sepedonicus</name>
    <name type="common">Clavibacter michiganensis subsp. sepedonicus</name>
    <dbReference type="NCBI Taxonomy" id="31964"/>
    <lineage>
        <taxon>Bacteria</taxon>
        <taxon>Bacillati</taxon>
        <taxon>Actinomycetota</taxon>
        <taxon>Actinomycetes</taxon>
        <taxon>Micrococcales</taxon>
        <taxon>Microbacteriaceae</taxon>
        <taxon>Clavibacter</taxon>
    </lineage>
</organism>
<name>COAA_CLASE</name>
<accession>B0RD37</accession>
<keyword id="KW-0067">ATP-binding</keyword>
<keyword id="KW-0173">Coenzyme A biosynthesis</keyword>
<keyword id="KW-0963">Cytoplasm</keyword>
<keyword id="KW-0418">Kinase</keyword>
<keyword id="KW-0547">Nucleotide-binding</keyword>
<keyword id="KW-0808">Transferase</keyword>